<organism>
    <name type="scientific">Escherichia coli O9:H4 (strain HS)</name>
    <dbReference type="NCBI Taxonomy" id="331112"/>
    <lineage>
        <taxon>Bacteria</taxon>
        <taxon>Pseudomonadati</taxon>
        <taxon>Pseudomonadota</taxon>
        <taxon>Gammaproteobacteria</taxon>
        <taxon>Enterobacterales</taxon>
        <taxon>Enterobacteriaceae</taxon>
        <taxon>Escherichia</taxon>
    </lineage>
</organism>
<protein>
    <recommendedName>
        <fullName>Autoinducer 2 import system permease protein LsrC</fullName>
        <shortName>AI-2 import system permease protein LsrC</shortName>
    </recommendedName>
</protein>
<reference key="1">
    <citation type="journal article" date="2008" name="J. Bacteriol.">
        <title>The pangenome structure of Escherichia coli: comparative genomic analysis of E. coli commensal and pathogenic isolates.</title>
        <authorList>
            <person name="Rasko D.A."/>
            <person name="Rosovitz M.J."/>
            <person name="Myers G.S.A."/>
            <person name="Mongodin E.F."/>
            <person name="Fricke W.F."/>
            <person name="Gajer P."/>
            <person name="Crabtree J."/>
            <person name="Sebaihia M."/>
            <person name="Thomson N.R."/>
            <person name="Chaudhuri R."/>
            <person name="Henderson I.R."/>
            <person name="Sperandio V."/>
            <person name="Ravel J."/>
        </authorList>
    </citation>
    <scope>NUCLEOTIDE SEQUENCE [LARGE SCALE GENOMIC DNA]</scope>
    <source>
        <strain>HS</strain>
    </source>
</reference>
<name>LSRC_ECOHS</name>
<feature type="chain" id="PRO_0000351341" description="Autoinducer 2 import system permease protein LsrC">
    <location>
        <begin position="1"/>
        <end position="342"/>
    </location>
</feature>
<feature type="topological domain" description="Periplasmic" evidence="2">
    <location>
        <begin position="1"/>
        <end position="13"/>
    </location>
</feature>
<feature type="transmembrane region" description="Helical" evidence="2">
    <location>
        <begin position="14"/>
        <end position="34"/>
    </location>
</feature>
<feature type="topological domain" description="Cytoplasmic" evidence="2">
    <location>
        <begin position="35"/>
        <end position="38"/>
    </location>
</feature>
<feature type="transmembrane region" description="Helical" evidence="2">
    <location>
        <begin position="39"/>
        <end position="59"/>
    </location>
</feature>
<feature type="topological domain" description="Periplasmic" evidence="2">
    <location>
        <begin position="60"/>
        <end position="69"/>
    </location>
</feature>
<feature type="transmembrane region" description="Helical" evidence="2">
    <location>
        <begin position="70"/>
        <end position="90"/>
    </location>
</feature>
<feature type="topological domain" description="Cytoplasmic" evidence="2">
    <location>
        <begin position="91"/>
        <end position="92"/>
    </location>
</feature>
<feature type="transmembrane region" description="Helical" evidence="2">
    <location>
        <begin position="93"/>
        <end position="113"/>
    </location>
</feature>
<feature type="topological domain" description="Periplasmic" evidence="2">
    <location>
        <position position="114"/>
    </location>
</feature>
<feature type="transmembrane region" description="Helical" evidence="2">
    <location>
        <begin position="115"/>
        <end position="135"/>
    </location>
</feature>
<feature type="topological domain" description="Cytoplasmic" evidence="2">
    <location>
        <begin position="136"/>
        <end position="154"/>
    </location>
</feature>
<feature type="transmembrane region" description="Helical" evidence="2">
    <location>
        <begin position="155"/>
        <end position="175"/>
    </location>
</feature>
<feature type="topological domain" description="Periplasmic" evidence="2">
    <location>
        <begin position="176"/>
        <end position="212"/>
    </location>
</feature>
<feature type="transmembrane region" description="Helical" evidence="2">
    <location>
        <begin position="213"/>
        <end position="233"/>
    </location>
</feature>
<feature type="topological domain" description="Cytoplasmic" evidence="2">
    <location>
        <begin position="234"/>
        <end position="251"/>
    </location>
</feature>
<feature type="transmembrane region" description="Helical" evidence="2">
    <location>
        <begin position="252"/>
        <end position="272"/>
    </location>
</feature>
<feature type="topological domain" description="Periplasmic" evidence="2">
    <location>
        <begin position="273"/>
        <end position="283"/>
    </location>
</feature>
<feature type="transmembrane region" description="Helical" evidence="2">
    <location>
        <begin position="284"/>
        <end position="304"/>
    </location>
</feature>
<feature type="topological domain" description="Cytoplasmic" evidence="2">
    <location>
        <begin position="305"/>
        <end position="342"/>
    </location>
</feature>
<accession>A8A067</accession>
<gene>
    <name type="primary">lsrC</name>
    <name type="ordered locus">EcHS_A1596</name>
</gene>
<evidence type="ECO:0000250" key="1"/>
<evidence type="ECO:0000255" key="2"/>
<evidence type="ECO:0000305" key="3"/>
<sequence>MLKFIQNNREITALLAVVLLFVLPGFLDRQYLSVQTLTMVYSSAQILILLAMGATLVMLTRNIDVSVGSITGMCAVLLGMLLNAGYSLPVACVTTLLLGLLAGFFNGVLVAWLKIPAIVATLGTLGLYRGIMLLWTGGKWIEGLPAELKQLSAPLLFGVSAIGWLTIILVAFMAWLLAKTAFGRSFYATGDNLQGARQLGVRTEAIRIVAFSLNGCMAALAGIVFASQIGFIPNQTGTGLEMKAIAACVLGGISLLGGSGAIIGAVLGAWFLTQIDSVLVLLRIPAWWNDFIAGLVLLAVLVFDGRLRCALERNLRRQKYARFMTPPPSVKPASSGKKREAA</sequence>
<dbReference type="EMBL" id="CP000802">
    <property type="protein sequence ID" value="ABV05921.1"/>
    <property type="molecule type" value="Genomic_DNA"/>
</dbReference>
<dbReference type="RefSeq" id="WP_000911192.1">
    <property type="nucleotide sequence ID" value="NC_009800.1"/>
</dbReference>
<dbReference type="KEGG" id="ecx:EcHS_A1596"/>
<dbReference type="HOGENOM" id="CLU_028880_0_1_6"/>
<dbReference type="GO" id="GO:0005886">
    <property type="term" value="C:plasma membrane"/>
    <property type="evidence" value="ECO:0007669"/>
    <property type="project" value="UniProtKB-SubCell"/>
</dbReference>
<dbReference type="GO" id="GO:0022857">
    <property type="term" value="F:transmembrane transporter activity"/>
    <property type="evidence" value="ECO:0007669"/>
    <property type="project" value="InterPro"/>
</dbReference>
<dbReference type="CDD" id="cd06579">
    <property type="entry name" value="TM_PBP1_transp_AraH_like"/>
    <property type="match status" value="1"/>
</dbReference>
<dbReference type="InterPro" id="IPR001851">
    <property type="entry name" value="ABC_transp_permease"/>
</dbReference>
<dbReference type="NCBIfam" id="NF011961">
    <property type="entry name" value="PRK15432.1"/>
    <property type="match status" value="1"/>
</dbReference>
<dbReference type="PANTHER" id="PTHR32196">
    <property type="entry name" value="ABC TRANSPORTER PERMEASE PROTEIN YPHD-RELATED-RELATED"/>
    <property type="match status" value="1"/>
</dbReference>
<dbReference type="PANTHER" id="PTHR32196:SF29">
    <property type="entry name" value="AUTOINDUCER 2 IMPORT SYSTEM PERMEASE PROTEIN LSRC"/>
    <property type="match status" value="1"/>
</dbReference>
<dbReference type="Pfam" id="PF02653">
    <property type="entry name" value="BPD_transp_2"/>
    <property type="match status" value="1"/>
</dbReference>
<proteinExistence type="inferred from homology"/>
<keyword id="KW-0997">Cell inner membrane</keyword>
<keyword id="KW-1003">Cell membrane</keyword>
<keyword id="KW-0472">Membrane</keyword>
<keyword id="KW-0812">Transmembrane</keyword>
<keyword id="KW-1133">Transmembrane helix</keyword>
<keyword id="KW-0813">Transport</keyword>
<comment type="function">
    <text evidence="1">Part of the ABC transporter complex LsrABCD involved in autoinducer 2 (AI-2) import. Probably responsible for the translocation of the substrate across the membrane (By similarity).</text>
</comment>
<comment type="subunit">
    <text evidence="1">The complex is composed of two ATP-binding proteins (LsrA), two transmembrane proteins (LsrC and LsrD) and a solute-binding protein (LsrB).</text>
</comment>
<comment type="subcellular location">
    <subcellularLocation>
        <location evidence="1">Cell inner membrane</location>
        <topology evidence="1">Multi-pass membrane protein</topology>
    </subcellularLocation>
</comment>
<comment type="similarity">
    <text evidence="3">Belongs to the binding-protein-dependent transport system permease family. AraH/RbsC subfamily.</text>
</comment>